<comment type="function">
    <text evidence="3 7">Part of the ABC transporter complex AraNPQ involved in the uptake of arabinooligosaccharides. Transports alpha-1,5-arabinooligosaccharides, at least up to four L-arabinosyl units (PubMed:20693325). AraN captures the substrate and delivers it to the two transmembrane components (Probable).</text>
</comment>
<comment type="subunit">
    <text evidence="3">The complex is composed of two ATP-binding proteins (MsmX), two transmembrane proteins (AraP and AraQ) and a solute-binding protein (AraN).</text>
</comment>
<comment type="subcellular location">
    <subcellularLocation>
        <location evidence="1">Cell membrane</location>
        <topology evidence="1">Lipid-anchor</topology>
    </subcellularLocation>
</comment>
<comment type="induction">
    <text evidence="2 4">Transcription is repressed by glucose and by the binding of AraR to the operon promoter. L-arabinose acts as an inducer by inhibiting the binding of AraR to the DNA, thus allowing expression of the gene.</text>
</comment>
<comment type="disruption phenotype">
    <text evidence="3">Deletion of the gene does not affect growth on glucose and arabinose, but it has a negative effect on the ability of the mutant to grow on the alpha-1,5-arabinose oligomers alpha-1,5-arabinobiose, alpha-1,5-arabinotriose and alpha-1,5-arabinotetraose. AraE/araN double mutant is unable to grow in the presence of alpha-1,5-arabinobiose.</text>
</comment>
<comment type="similarity">
    <text evidence="6">Belongs to the bacterial solute-binding protein 1 family.</text>
</comment>
<protein>
    <recommendedName>
        <fullName evidence="6">Arabinooligosaccharide-binding protein</fullName>
    </recommendedName>
</protein>
<dbReference type="EMBL" id="X89810">
    <property type="protein sequence ID" value="CAA61934.1"/>
    <property type="molecule type" value="Genomic_DNA"/>
</dbReference>
<dbReference type="EMBL" id="Z75208">
    <property type="protein sequence ID" value="CAA99592.1"/>
    <property type="molecule type" value="Genomic_DNA"/>
</dbReference>
<dbReference type="EMBL" id="AL009126">
    <property type="protein sequence ID" value="CAB14835.2"/>
    <property type="molecule type" value="Genomic_DNA"/>
</dbReference>
<dbReference type="PIR" id="A69588">
    <property type="entry name" value="A69588"/>
</dbReference>
<dbReference type="RefSeq" id="NP_390753.2">
    <property type="nucleotide sequence ID" value="NC_000964.3"/>
</dbReference>
<dbReference type="RefSeq" id="WP_004399072.1">
    <property type="nucleotide sequence ID" value="NZ_OZ025638.1"/>
</dbReference>
<dbReference type="SMR" id="P94528"/>
<dbReference type="FunCoup" id="P94528">
    <property type="interactions" value="158"/>
</dbReference>
<dbReference type="STRING" id="224308.BSU28750"/>
<dbReference type="TCDB" id="3.A.1.1.34">
    <property type="family name" value="the atp-binding cassette (abc) superfamily"/>
</dbReference>
<dbReference type="PaxDb" id="224308-BSU28750"/>
<dbReference type="EnsemblBacteria" id="CAB14835">
    <property type="protein sequence ID" value="CAB14835"/>
    <property type="gene ID" value="BSU_28750"/>
</dbReference>
<dbReference type="GeneID" id="937433"/>
<dbReference type="KEGG" id="bsu:BSU28750"/>
<dbReference type="PATRIC" id="fig|224308.179.peg.3123"/>
<dbReference type="eggNOG" id="COG1653">
    <property type="taxonomic scope" value="Bacteria"/>
</dbReference>
<dbReference type="InParanoid" id="P94528"/>
<dbReference type="OrthoDB" id="9768630at2"/>
<dbReference type="PhylomeDB" id="P94528"/>
<dbReference type="BioCyc" id="BSUB:BSU28750-MONOMER"/>
<dbReference type="Proteomes" id="UP000001570">
    <property type="component" value="Chromosome"/>
</dbReference>
<dbReference type="GO" id="GO:0005886">
    <property type="term" value="C:plasma membrane"/>
    <property type="evidence" value="ECO:0007669"/>
    <property type="project" value="UniProtKB-SubCell"/>
</dbReference>
<dbReference type="CDD" id="cd13585">
    <property type="entry name" value="PBP2_TMBP_like"/>
    <property type="match status" value="1"/>
</dbReference>
<dbReference type="Gene3D" id="3.40.190.10">
    <property type="entry name" value="Periplasmic binding protein-like II"/>
    <property type="match status" value="1"/>
</dbReference>
<dbReference type="InterPro" id="IPR050490">
    <property type="entry name" value="Bact_solute-bd_prot1"/>
</dbReference>
<dbReference type="InterPro" id="IPR006059">
    <property type="entry name" value="SBP"/>
</dbReference>
<dbReference type="PANTHER" id="PTHR43649">
    <property type="entry name" value="ARABINOSE-BINDING PROTEIN-RELATED"/>
    <property type="match status" value="1"/>
</dbReference>
<dbReference type="PANTHER" id="PTHR43649:SF33">
    <property type="entry name" value="POLYGALACTURONAN_RHAMNOGALACTURONAN-BINDING PROTEIN YTCQ"/>
    <property type="match status" value="1"/>
</dbReference>
<dbReference type="Pfam" id="PF01547">
    <property type="entry name" value="SBP_bac_1"/>
    <property type="match status" value="1"/>
</dbReference>
<dbReference type="SUPFAM" id="SSF53850">
    <property type="entry name" value="Periplasmic binding protein-like II"/>
    <property type="match status" value="1"/>
</dbReference>
<dbReference type="PROSITE" id="PS51257">
    <property type="entry name" value="PROKAR_LIPOPROTEIN"/>
    <property type="match status" value="1"/>
</dbReference>
<accession>P94528</accession>
<accession>O05093</accession>
<name>ARAN_BACSU</name>
<sequence length="433" mass="48674">MKKMTVCFLVLMMLLTLVIAGCSAEKSSGKSGETELTFWTFNGLHEQFYVEMVKEWNKKYPDRKIKLNTVVYPYGQMHDNLSISLIAGEGVPDIADVELARFSNFLKGSDIPLADLTPLIEKDRDKFVEARLTLYSKNGKLYGLDTHVGTTVMFYNMDVMKKAGVNPDDIKTWDDYHKAGQKVRKVTGKPMGTVETNDSATFLSMISQQNSGYFDKNGKLILNNDTNVKTLQYLKDMINDKTMIPAPGGGHHSEEYYGFMNQGGAASVLMPIWYMGRFIDYMPDLKGKIAIRPLPAWKEGGDRSAGLGGTATVVPKQSKHVELAKEFLAFAKGSEEGNKKLWSVLGFDPLRWDVWSSKELKEKNKYTDYFQNGTGIFSVLLDIKDEINPIYLHEDFAKASDLVNRSVLFDALKSQQKTPKQALDRAAGELKQK</sequence>
<proteinExistence type="evidence at protein level"/>
<organism>
    <name type="scientific">Bacillus subtilis (strain 168)</name>
    <dbReference type="NCBI Taxonomy" id="224308"/>
    <lineage>
        <taxon>Bacteria</taxon>
        <taxon>Bacillati</taxon>
        <taxon>Bacillota</taxon>
        <taxon>Bacilli</taxon>
        <taxon>Bacillales</taxon>
        <taxon>Bacillaceae</taxon>
        <taxon>Bacillus</taxon>
    </lineage>
</organism>
<feature type="signal peptide" evidence="1">
    <location>
        <begin position="1"/>
        <end position="21"/>
    </location>
</feature>
<feature type="chain" id="PRO_0000031689" description="Arabinooligosaccharide-binding protein">
    <location>
        <begin position="22"/>
        <end position="433"/>
    </location>
</feature>
<feature type="lipid moiety-binding region" description="N-palmitoyl cysteine" evidence="1">
    <location>
        <position position="22"/>
    </location>
</feature>
<feature type="lipid moiety-binding region" description="S-diacylglycerol cysteine" evidence="1">
    <location>
        <position position="22"/>
    </location>
</feature>
<feature type="sequence conflict" description="In Ref. 2; CAA99592." evidence="6" ref="2">
    <original>N</original>
    <variation>S</variation>
    <location>
        <position position="42"/>
    </location>
</feature>
<keyword id="KW-1003">Cell membrane</keyword>
<keyword id="KW-0449">Lipoprotein</keyword>
<keyword id="KW-0472">Membrane</keyword>
<keyword id="KW-0564">Palmitate</keyword>
<keyword id="KW-1185">Reference proteome</keyword>
<keyword id="KW-0732">Signal</keyword>
<keyword id="KW-0762">Sugar transport</keyword>
<keyword id="KW-0813">Transport</keyword>
<evidence type="ECO:0000255" key="1">
    <source>
        <dbReference type="PROSITE-ProRule" id="PRU00303"/>
    </source>
</evidence>
<evidence type="ECO:0000269" key="2">
    <source>
    </source>
</evidence>
<evidence type="ECO:0000269" key="3">
    <source>
    </source>
</evidence>
<evidence type="ECO:0000269" key="4">
    <source>
    </source>
</evidence>
<evidence type="ECO:0000303" key="5">
    <source>
    </source>
</evidence>
<evidence type="ECO:0000305" key="6"/>
<evidence type="ECO:0000305" key="7">
    <source>
    </source>
</evidence>
<gene>
    <name evidence="5" type="primary">araN</name>
    <name type="synonym">yseC</name>
    <name type="ordered locus">BSU28750</name>
</gene>
<reference key="1">
    <citation type="journal article" date="1997" name="Microbiology">
        <title>The Bacillus subtilis L-arabinose (ara) operon: nucleotide sequence, genetic organization and expression.</title>
        <authorList>
            <person name="Sa-Nogueira I.M.G."/>
            <person name="Nogueira T.V."/>
            <person name="Soares S."/>
            <person name="de Lencastre H."/>
        </authorList>
    </citation>
    <scope>NUCLEOTIDE SEQUENCE [GENOMIC DNA]</scope>
    <scope>TRANSCRIPTIONAL REGULATION</scope>
    <source>
        <strain>168</strain>
    </source>
</reference>
<reference key="2">
    <citation type="journal article" date="1996" name="Microbiology">
        <title>The dnaB-pheA (256 degrees-240 degrees) region of the Bacillus subtilis chromosome containing genes responsible for stress responses, the utilization of plant cell walls and primary metabolism.</title>
        <authorList>
            <person name="Wipat A."/>
            <person name="Carter N."/>
            <person name="Brignell C.S."/>
            <person name="Guy J.B."/>
            <person name="Piper K."/>
            <person name="Sanders J."/>
            <person name="Emmerson P.T."/>
            <person name="Harwood C.R."/>
        </authorList>
    </citation>
    <scope>NUCLEOTIDE SEQUENCE [GENOMIC DNA]</scope>
    <source>
        <strain>168</strain>
    </source>
</reference>
<reference key="3">
    <citation type="journal article" date="1997" name="Nature">
        <title>The complete genome sequence of the Gram-positive bacterium Bacillus subtilis.</title>
        <authorList>
            <person name="Kunst F."/>
            <person name="Ogasawara N."/>
            <person name="Moszer I."/>
            <person name="Albertini A.M."/>
            <person name="Alloni G."/>
            <person name="Azevedo V."/>
            <person name="Bertero M.G."/>
            <person name="Bessieres P."/>
            <person name="Bolotin A."/>
            <person name="Borchert S."/>
            <person name="Borriss R."/>
            <person name="Boursier L."/>
            <person name="Brans A."/>
            <person name="Braun M."/>
            <person name="Brignell S.C."/>
            <person name="Bron S."/>
            <person name="Brouillet S."/>
            <person name="Bruschi C.V."/>
            <person name="Caldwell B."/>
            <person name="Capuano V."/>
            <person name="Carter N.M."/>
            <person name="Choi S.-K."/>
            <person name="Codani J.-J."/>
            <person name="Connerton I.F."/>
            <person name="Cummings N.J."/>
            <person name="Daniel R.A."/>
            <person name="Denizot F."/>
            <person name="Devine K.M."/>
            <person name="Duesterhoeft A."/>
            <person name="Ehrlich S.D."/>
            <person name="Emmerson P.T."/>
            <person name="Entian K.-D."/>
            <person name="Errington J."/>
            <person name="Fabret C."/>
            <person name="Ferrari E."/>
            <person name="Foulger D."/>
            <person name="Fritz C."/>
            <person name="Fujita M."/>
            <person name="Fujita Y."/>
            <person name="Fuma S."/>
            <person name="Galizzi A."/>
            <person name="Galleron N."/>
            <person name="Ghim S.-Y."/>
            <person name="Glaser P."/>
            <person name="Goffeau A."/>
            <person name="Golightly E.J."/>
            <person name="Grandi G."/>
            <person name="Guiseppi G."/>
            <person name="Guy B.J."/>
            <person name="Haga K."/>
            <person name="Haiech J."/>
            <person name="Harwood C.R."/>
            <person name="Henaut A."/>
            <person name="Hilbert H."/>
            <person name="Holsappel S."/>
            <person name="Hosono S."/>
            <person name="Hullo M.-F."/>
            <person name="Itaya M."/>
            <person name="Jones L.-M."/>
            <person name="Joris B."/>
            <person name="Karamata D."/>
            <person name="Kasahara Y."/>
            <person name="Klaerr-Blanchard M."/>
            <person name="Klein C."/>
            <person name="Kobayashi Y."/>
            <person name="Koetter P."/>
            <person name="Koningstein G."/>
            <person name="Krogh S."/>
            <person name="Kumano M."/>
            <person name="Kurita K."/>
            <person name="Lapidus A."/>
            <person name="Lardinois S."/>
            <person name="Lauber J."/>
            <person name="Lazarevic V."/>
            <person name="Lee S.-M."/>
            <person name="Levine A."/>
            <person name="Liu H."/>
            <person name="Masuda S."/>
            <person name="Mauel C."/>
            <person name="Medigue C."/>
            <person name="Medina N."/>
            <person name="Mellado R.P."/>
            <person name="Mizuno M."/>
            <person name="Moestl D."/>
            <person name="Nakai S."/>
            <person name="Noback M."/>
            <person name="Noone D."/>
            <person name="O'Reilly M."/>
            <person name="Ogawa K."/>
            <person name="Ogiwara A."/>
            <person name="Oudega B."/>
            <person name="Park S.-H."/>
            <person name="Parro V."/>
            <person name="Pohl T.M."/>
            <person name="Portetelle D."/>
            <person name="Porwollik S."/>
            <person name="Prescott A.M."/>
            <person name="Presecan E."/>
            <person name="Pujic P."/>
            <person name="Purnelle B."/>
            <person name="Rapoport G."/>
            <person name="Rey M."/>
            <person name="Reynolds S."/>
            <person name="Rieger M."/>
            <person name="Rivolta C."/>
            <person name="Rocha E."/>
            <person name="Roche B."/>
            <person name="Rose M."/>
            <person name="Sadaie Y."/>
            <person name="Sato T."/>
            <person name="Scanlan E."/>
            <person name="Schleich S."/>
            <person name="Schroeter R."/>
            <person name="Scoffone F."/>
            <person name="Sekiguchi J."/>
            <person name="Sekowska A."/>
            <person name="Seror S.J."/>
            <person name="Serror P."/>
            <person name="Shin B.-S."/>
            <person name="Soldo B."/>
            <person name="Sorokin A."/>
            <person name="Tacconi E."/>
            <person name="Takagi T."/>
            <person name="Takahashi H."/>
            <person name="Takemaru K."/>
            <person name="Takeuchi M."/>
            <person name="Tamakoshi A."/>
            <person name="Tanaka T."/>
            <person name="Terpstra P."/>
            <person name="Tognoni A."/>
            <person name="Tosato V."/>
            <person name="Uchiyama S."/>
            <person name="Vandenbol M."/>
            <person name="Vannier F."/>
            <person name="Vassarotti A."/>
            <person name="Viari A."/>
            <person name="Wambutt R."/>
            <person name="Wedler E."/>
            <person name="Wedler H."/>
            <person name="Weitzenegger T."/>
            <person name="Winters P."/>
            <person name="Wipat A."/>
            <person name="Yamamoto H."/>
            <person name="Yamane K."/>
            <person name="Yasumoto K."/>
            <person name="Yata K."/>
            <person name="Yoshida K."/>
            <person name="Yoshikawa H.-F."/>
            <person name="Zumstein E."/>
            <person name="Yoshikawa H."/>
            <person name="Danchin A."/>
        </authorList>
    </citation>
    <scope>NUCLEOTIDE SEQUENCE [LARGE SCALE GENOMIC DNA]</scope>
    <source>
        <strain>168</strain>
    </source>
</reference>
<reference key="4">
    <citation type="journal article" date="2009" name="Microbiology">
        <title>From a consortium sequence to a unified sequence: the Bacillus subtilis 168 reference genome a decade later.</title>
        <authorList>
            <person name="Barbe V."/>
            <person name="Cruveiller S."/>
            <person name="Kunst F."/>
            <person name="Lenoble P."/>
            <person name="Meurice G."/>
            <person name="Sekowska A."/>
            <person name="Vallenet D."/>
            <person name="Wang T."/>
            <person name="Moszer I."/>
            <person name="Medigue C."/>
            <person name="Danchin A."/>
        </authorList>
    </citation>
    <scope>SEQUENCE REVISION TO 42</scope>
</reference>
<reference key="5">
    <citation type="journal article" date="1999" name="Mol. Microbiol.">
        <title>Mode of action of AraR, the key regulator of L-arabinose metabolism in Bacillus subtilis.</title>
        <authorList>
            <person name="Mota L.J."/>
            <person name="Tavares P."/>
            <person name="Sa-Nogueira I.M.G."/>
        </authorList>
    </citation>
    <scope>TRANSCRIPTIONAL REGULATION</scope>
</reference>
<reference key="6">
    <citation type="journal article" date="2010" name="J. Bacteriol.">
        <title>A multitask ATPase serving different ABC-type sugar importers in Bacillus subtilis.</title>
        <authorList>
            <person name="Ferreira M.J."/>
            <person name="Sa-Nogueira I.D."/>
        </authorList>
    </citation>
    <scope>FUNCTION</scope>
    <scope>SUBUNIT</scope>
    <scope>DISRUPTION PHENOTYPE</scope>
</reference>